<name>CANSD_VIBAX</name>
<keyword id="KW-0521">NADP</keyword>
<keyword id="KW-0560">Oxidoreductase</keyword>
<keyword id="KW-0620">Polyamine biosynthesis</keyword>
<dbReference type="EC" id="1.5.1.43" evidence="2"/>
<dbReference type="EMBL" id="CP006718">
    <property type="protein sequence ID" value="AGV16856.1"/>
    <property type="molecule type" value="Genomic_DNA"/>
</dbReference>
<dbReference type="RefSeq" id="WP_012841628.1">
    <property type="nucleotide sequence ID" value="NZ_BATK01000017.1"/>
</dbReference>
<dbReference type="SMR" id="P0DPE4"/>
<dbReference type="KEGG" id="vag:N646_1023"/>
<dbReference type="HOGENOM" id="CLU_032114_0_0_6"/>
<dbReference type="SABIO-RK" id="P0DPE4"/>
<dbReference type="Proteomes" id="UP000016714">
    <property type="component" value="Chromosome 1"/>
</dbReference>
<dbReference type="GO" id="GO:0102143">
    <property type="term" value="F:carboxynorspermidine dehydrogenase activity"/>
    <property type="evidence" value="ECO:0007669"/>
    <property type="project" value="UniProtKB-EC"/>
</dbReference>
<dbReference type="GO" id="GO:0006596">
    <property type="term" value="P:polyamine biosynthetic process"/>
    <property type="evidence" value="ECO:0007669"/>
    <property type="project" value="UniProtKB-KW"/>
</dbReference>
<dbReference type="Gene3D" id="3.30.360.10">
    <property type="entry name" value="Dihydrodipicolinate Reductase, domain 2"/>
    <property type="match status" value="1"/>
</dbReference>
<dbReference type="Gene3D" id="3.40.50.720">
    <property type="entry name" value="NAD(P)-binding Rossmann-like Domain"/>
    <property type="match status" value="1"/>
</dbReference>
<dbReference type="InterPro" id="IPR050050">
    <property type="entry name" value="CANSDH"/>
</dbReference>
<dbReference type="InterPro" id="IPR036291">
    <property type="entry name" value="NAD(P)-bd_dom_sf"/>
</dbReference>
<dbReference type="InterPro" id="IPR032095">
    <property type="entry name" value="Sacchrp_dh-like_C"/>
</dbReference>
<dbReference type="InterPro" id="IPR005097">
    <property type="entry name" value="Sacchrp_dh_NADP-bd"/>
</dbReference>
<dbReference type="NCBIfam" id="NF043000">
    <property type="entry name" value="carsnrspmd_synth"/>
    <property type="match status" value="1"/>
</dbReference>
<dbReference type="PANTHER" id="PTHR43796">
    <property type="entry name" value="CARBOXYNORSPERMIDINE SYNTHASE"/>
    <property type="match status" value="1"/>
</dbReference>
<dbReference type="PANTHER" id="PTHR43796:SF2">
    <property type="entry name" value="CARBOXYNORSPERMIDINE SYNTHASE"/>
    <property type="match status" value="1"/>
</dbReference>
<dbReference type="Pfam" id="PF16653">
    <property type="entry name" value="Sacchrp_dh_C"/>
    <property type="match status" value="1"/>
</dbReference>
<dbReference type="Pfam" id="PF03435">
    <property type="entry name" value="Sacchrp_dh_NADP"/>
    <property type="match status" value="1"/>
</dbReference>
<dbReference type="SUPFAM" id="SSF51735">
    <property type="entry name" value="NAD(P)-binding Rossmann-fold domains"/>
    <property type="match status" value="1"/>
</dbReference>
<organism>
    <name type="scientific">Vibrio alginolyticus (strain ATCC 17749 / DSM 2171 / NBRC 15630 / NCIMB 1903 / NCTC 12160 / XII-53)</name>
    <dbReference type="NCBI Taxonomy" id="1219076"/>
    <lineage>
        <taxon>Bacteria</taxon>
        <taxon>Pseudomonadati</taxon>
        <taxon>Pseudomonadota</taxon>
        <taxon>Gammaproteobacteria</taxon>
        <taxon>Vibrionales</taxon>
        <taxon>Vibrionaceae</taxon>
        <taxon>Vibrio</taxon>
    </lineage>
</organism>
<protein>
    <recommendedName>
        <fullName evidence="3">Carboxynorspermidine synthase</fullName>
        <shortName evidence="3">C-NSPD synthase</shortName>
        <ecNumber evidence="2">1.5.1.43</ecNumber>
    </recommendedName>
    <alternativeName>
        <fullName evidence="1">Carboxynorspermidine dehydrogenase</fullName>
        <shortName evidence="1">CANSDH</shortName>
    </alternativeName>
</protein>
<feature type="chain" id="PRO_0000443306" description="Carboxynorspermidine synthase">
    <location>
        <begin position="1"/>
        <end position="414"/>
    </location>
</feature>
<evidence type="ECO:0000250" key="1">
    <source>
        <dbReference type="UniProtKB" id="Q9KRL3"/>
    </source>
</evidence>
<evidence type="ECO:0000269" key="2">
    <source>
    </source>
</evidence>
<evidence type="ECO:0000303" key="3">
    <source>
    </source>
</evidence>
<evidence type="ECO:0000305" key="4"/>
<evidence type="ECO:0000305" key="5">
    <source>
    </source>
</evidence>
<evidence type="ECO:0000312" key="6">
    <source>
        <dbReference type="EMBL" id="AGV16856.1"/>
    </source>
</evidence>
<gene>
    <name evidence="6" type="ORF">N646_1023</name>
</gene>
<comment type="function">
    <text evidence="2">Involved in norspermidine biosynthesis. Catalyzes the synthesis of carboxynorspermidine from L-aspartate 4-semialdehyde and 1,3-diaminopropane. Is also slightly active with putrescine as a substrate.</text>
</comment>
<comment type="catalytic activity">
    <reaction evidence="2">
        <text>carboxynorspermidine + NADP(+) + H2O = L-aspartate 4-semialdehyde + propane-1,3-diamine + NADPH + H(+)</text>
        <dbReference type="Rhea" id="RHEA:34115"/>
        <dbReference type="ChEBI" id="CHEBI:15377"/>
        <dbReference type="ChEBI" id="CHEBI:15378"/>
        <dbReference type="ChEBI" id="CHEBI:57484"/>
        <dbReference type="ChEBI" id="CHEBI:57783"/>
        <dbReference type="ChEBI" id="CHEBI:58349"/>
        <dbReference type="ChEBI" id="CHEBI:65070"/>
        <dbReference type="ChEBI" id="CHEBI:537519"/>
        <dbReference type="EC" id="1.5.1.43"/>
    </reaction>
</comment>
<comment type="catalytic activity">
    <reaction evidence="2">
        <text>carboxyspermidine + NADP(+) + H2O = L-aspartate 4-semialdehyde + putrescine + NADPH + H(+)</text>
        <dbReference type="Rhea" id="RHEA:34111"/>
        <dbReference type="ChEBI" id="CHEBI:15377"/>
        <dbReference type="ChEBI" id="CHEBI:15378"/>
        <dbReference type="ChEBI" id="CHEBI:57783"/>
        <dbReference type="ChEBI" id="CHEBI:58349"/>
        <dbReference type="ChEBI" id="CHEBI:65072"/>
        <dbReference type="ChEBI" id="CHEBI:326268"/>
        <dbReference type="ChEBI" id="CHEBI:537519"/>
        <dbReference type="EC" id="1.5.1.43"/>
    </reaction>
</comment>
<comment type="activity regulation">
    <text evidence="2">Activated by dithiothreitol and inhibited by SH-reactive compounds.</text>
</comment>
<comment type="biophysicochemical properties">
    <kinetics>
        <KM evidence="2">1.51 mM for NADPH</KM>
        <KM evidence="2">2.97 mM for NADH</KM>
        <Vmax evidence="2">31.0 umol/min/mg enzyme toward carboxynorspermidine (in the presence of NADPH)</Vmax>
        <Vmax evidence="2">13.5 umol/min/mg enzyme toward carboxynorspermidine (in the presence of NADH)</Vmax>
    </kinetics>
    <phDependence>
        <text evidence="2">Optimum pH is 7.25-7.5.</text>
    </phDependence>
    <temperatureDependence>
        <text evidence="2">Optimum temperature is 37 degrees Celsius.</text>
    </temperatureDependence>
</comment>
<comment type="subunit">
    <text evidence="5">Homodimer.</text>
</comment>
<comment type="similarity">
    <text evidence="4">Belongs to the saccharopine dehydrogenase family. Carboxynorspermidine synthase subfamily.</text>
</comment>
<reference key="1">
    <citation type="journal article" date="2015" name="Genome Announc.">
        <title>Complete genome sequence of Vibrio alginolyticus ATCC 17749.</title>
        <authorList>
            <person name="Liu X.F."/>
            <person name="Cao Y."/>
            <person name="Zhang H.L."/>
            <person name="Chen Y.J."/>
            <person name="Hu C.J."/>
        </authorList>
    </citation>
    <scope>NUCLEOTIDE SEQUENCE [LARGE SCALE GENOMIC DNA]</scope>
    <source>
        <strain>ATCC 17749 / DSM 2171 / NBRC 15630 / NCIMB 1903 / NCTC 12160 / XII-53</strain>
    </source>
</reference>
<reference key="2">
    <citation type="journal article" date="1991" name="J. Gen. Microbiol.">
        <title>Purification and some properties of carboxynorspermidine synthase participating in a novel biosynthetic pathway for norspermidine in Vibrio alginolyticus.</title>
        <authorList>
            <person name="Nakao H."/>
            <person name="Shinoda S."/>
            <person name="Yamamoto S."/>
        </authorList>
    </citation>
    <scope>FUNCTION</scope>
    <scope>CATALYTIC ACTIVITY</scope>
    <scope>BIOPHYSICOCHEMICAL PROPERTIES</scope>
    <scope>ACTIVITY REGULATION</scope>
    <scope>SUBUNIT</scope>
    <source>
        <strain>ATCC 17749 / DSM 2171 / NBRC 15630 / NCIMB 1903 / NCTC 12160 / XII-53</strain>
    </source>
</reference>
<sequence length="414" mass="46105">MAILQIGAGGVGWVVAHKAAQNNDVLGDITIASRTVGKCEKIIESIQKKNNLKDSTKKLEARAVNADDVDSLVALIKEVQPDLVINAGPPWVNMSIMEACYQAKVSYLDTSVAVDLCSEGQQVPQAYDWQWGYREKFEEAGITGILGAGFDPGVVSVFAAYAVKHLFDEIDTIDVMDVNAGDHGKKFATNFDPETNMLEIQGDSFYWENGEWKQVPCHSRMLEFEFPNCGSHKVYSMAHDEVRSMQEFIPAKRIEFWMGFGDRYLNYFNVMRDIGLLSPDPLTLHDGTVVQPLHVLKALLPDPTSLAPGYTGLTCIGTWVQGKKDGKERSVFIYNNADHEVAYEDVEHQAISYTTGVPAITAALQFFRGKWADKGVFNMEQLDPDPFLETMPSIGLDWHVQELEPGQPVIHKLK</sequence>
<proteinExistence type="evidence at protein level"/>
<accession>P0DPE4</accession>
<accession>A0A2I3C6P1</accession>